<keyword id="KW-0131">Cell cycle</keyword>
<keyword id="KW-0132">Cell division</keyword>
<keyword id="KW-0143">Chaperone</keyword>
<keyword id="KW-0963">Cytoplasm</keyword>
<keyword id="KW-0413">Isomerase</keyword>
<keyword id="KW-0697">Rotamase</keyword>
<name>TIG_LISW6</name>
<proteinExistence type="inferred from homology"/>
<accession>A0AI70</accession>
<comment type="function">
    <text evidence="1">Involved in protein export. Acts as a chaperone by maintaining the newly synthesized protein in an open conformation. Functions as a peptidyl-prolyl cis-trans isomerase.</text>
</comment>
<comment type="catalytic activity">
    <reaction evidence="1">
        <text>[protein]-peptidylproline (omega=180) = [protein]-peptidylproline (omega=0)</text>
        <dbReference type="Rhea" id="RHEA:16237"/>
        <dbReference type="Rhea" id="RHEA-COMP:10747"/>
        <dbReference type="Rhea" id="RHEA-COMP:10748"/>
        <dbReference type="ChEBI" id="CHEBI:83833"/>
        <dbReference type="ChEBI" id="CHEBI:83834"/>
        <dbReference type="EC" id="5.2.1.8"/>
    </reaction>
</comment>
<comment type="subcellular location">
    <subcellularLocation>
        <location>Cytoplasm</location>
    </subcellularLocation>
    <text evidence="1">About half TF is bound to the ribosome near the polypeptide exit tunnel while the other half is free in the cytoplasm.</text>
</comment>
<comment type="domain">
    <text evidence="1">Consists of 3 domains; the N-terminus binds the ribosome, the middle domain has PPIase activity, while the C-terminus has intrinsic chaperone activity on its own.</text>
</comment>
<comment type="similarity">
    <text evidence="1">Belongs to the FKBP-type PPIase family. Tig subfamily.</text>
</comment>
<reference key="1">
    <citation type="journal article" date="2006" name="J. Bacteriol.">
        <title>Whole-genome sequence of Listeria welshimeri reveals common steps in genome reduction with Listeria innocua as compared to Listeria monocytogenes.</title>
        <authorList>
            <person name="Hain T."/>
            <person name="Steinweg C."/>
            <person name="Kuenne C.T."/>
            <person name="Billion A."/>
            <person name="Ghai R."/>
            <person name="Chatterjee S.S."/>
            <person name="Domann E."/>
            <person name="Kaerst U."/>
            <person name="Goesmann A."/>
            <person name="Bekel T."/>
            <person name="Bartels D."/>
            <person name="Kaiser O."/>
            <person name="Meyer F."/>
            <person name="Puehler A."/>
            <person name="Weisshaar B."/>
            <person name="Wehland J."/>
            <person name="Liang C."/>
            <person name="Dandekar T."/>
            <person name="Lampidis R."/>
            <person name="Kreft J."/>
            <person name="Goebel W."/>
            <person name="Chakraborty T."/>
        </authorList>
    </citation>
    <scope>NUCLEOTIDE SEQUENCE [LARGE SCALE GENOMIC DNA]</scope>
    <source>
        <strain>ATCC 35897 / DSM 20650 / CCUG 15529 / CIP 8149 / NCTC 11857 / SLCC 5334 / V8</strain>
    </source>
</reference>
<protein>
    <recommendedName>
        <fullName evidence="1">Trigger factor</fullName>
        <shortName evidence="1">TF</shortName>
        <ecNumber evidence="1">5.2.1.8</ecNumber>
    </recommendedName>
    <alternativeName>
        <fullName evidence="1">PPIase</fullName>
    </alternativeName>
</protein>
<organism>
    <name type="scientific">Listeria welshimeri serovar 6b (strain ATCC 35897 / DSM 20650 / CCUG 15529 / CIP 8149 / NCTC 11857 / SLCC 5334 / V8)</name>
    <dbReference type="NCBI Taxonomy" id="386043"/>
    <lineage>
        <taxon>Bacteria</taxon>
        <taxon>Bacillati</taxon>
        <taxon>Bacillota</taxon>
        <taxon>Bacilli</taxon>
        <taxon>Bacillales</taxon>
        <taxon>Listeriaceae</taxon>
        <taxon>Listeria</taxon>
    </lineage>
</organism>
<sequence length="427" mass="47886">MSVKWEKQEGNVGKLTFDIEQEKVKEGLDRAFVKVRKTLNVPGFRKGKVPRQIFNQRFGEEALYQDALDILLPEVYSQAIDEAGIDPVDTPQVNIESMEKGETWVLTAEVTVKPEVKLGDYKGLEVEKRETELTTEELEAELKQLQERQAELVVKEDAPAENGDTVILDFEGFKDGVAFEGGQAENHSLELGSGQFIPGFEEKLVGLKAGDEADIELTFPEEYHAEDLAGQPVVFKVKLHEIKTKEVPALDDELAKDIDEEVETLDELKEKISKRLQEAKEESVAQAKQEEVIAKAVENAEVDIPHAMVHHEADHLMNHFAQDLQAQGLTPELYYQFTGQTEEAMHAQMETDAEKRVKMNLVLEAIAEAENIEPTEEAIDEEISTLAEKYGMEKDAVRAALGDMSELKSDLKIRKAIDVLLDSAVEK</sequence>
<feature type="chain" id="PRO_1000022704" description="Trigger factor">
    <location>
        <begin position="1"/>
        <end position="427"/>
    </location>
</feature>
<feature type="domain" description="PPIase FKBP-type" evidence="1">
    <location>
        <begin position="163"/>
        <end position="248"/>
    </location>
</feature>
<dbReference type="EC" id="5.2.1.8" evidence="1"/>
<dbReference type="EMBL" id="AM263198">
    <property type="protein sequence ID" value="CAK20702.1"/>
    <property type="molecule type" value="Genomic_DNA"/>
</dbReference>
<dbReference type="RefSeq" id="WP_011702093.1">
    <property type="nucleotide sequence ID" value="NC_008555.1"/>
</dbReference>
<dbReference type="SMR" id="A0AI70"/>
<dbReference type="STRING" id="386043.lwe1284"/>
<dbReference type="GeneID" id="61189161"/>
<dbReference type="KEGG" id="lwe:lwe1284"/>
<dbReference type="eggNOG" id="COG0544">
    <property type="taxonomic scope" value="Bacteria"/>
</dbReference>
<dbReference type="HOGENOM" id="CLU_033058_3_2_9"/>
<dbReference type="OrthoDB" id="9767721at2"/>
<dbReference type="Proteomes" id="UP000000779">
    <property type="component" value="Chromosome"/>
</dbReference>
<dbReference type="GO" id="GO:0005737">
    <property type="term" value="C:cytoplasm"/>
    <property type="evidence" value="ECO:0007669"/>
    <property type="project" value="UniProtKB-SubCell"/>
</dbReference>
<dbReference type="GO" id="GO:0003755">
    <property type="term" value="F:peptidyl-prolyl cis-trans isomerase activity"/>
    <property type="evidence" value="ECO:0007669"/>
    <property type="project" value="UniProtKB-UniRule"/>
</dbReference>
<dbReference type="GO" id="GO:0044183">
    <property type="term" value="F:protein folding chaperone"/>
    <property type="evidence" value="ECO:0007669"/>
    <property type="project" value="TreeGrafter"/>
</dbReference>
<dbReference type="GO" id="GO:0043022">
    <property type="term" value="F:ribosome binding"/>
    <property type="evidence" value="ECO:0007669"/>
    <property type="project" value="TreeGrafter"/>
</dbReference>
<dbReference type="GO" id="GO:0051083">
    <property type="term" value="P:'de novo' cotranslational protein folding"/>
    <property type="evidence" value="ECO:0007669"/>
    <property type="project" value="TreeGrafter"/>
</dbReference>
<dbReference type="GO" id="GO:0051301">
    <property type="term" value="P:cell division"/>
    <property type="evidence" value="ECO:0007669"/>
    <property type="project" value="UniProtKB-KW"/>
</dbReference>
<dbReference type="GO" id="GO:0061077">
    <property type="term" value="P:chaperone-mediated protein folding"/>
    <property type="evidence" value="ECO:0007669"/>
    <property type="project" value="TreeGrafter"/>
</dbReference>
<dbReference type="GO" id="GO:0015031">
    <property type="term" value="P:protein transport"/>
    <property type="evidence" value="ECO:0007669"/>
    <property type="project" value="UniProtKB-UniRule"/>
</dbReference>
<dbReference type="GO" id="GO:0043335">
    <property type="term" value="P:protein unfolding"/>
    <property type="evidence" value="ECO:0007669"/>
    <property type="project" value="TreeGrafter"/>
</dbReference>
<dbReference type="FunFam" id="3.10.50.40:FF:000001">
    <property type="entry name" value="Trigger factor"/>
    <property type="match status" value="1"/>
</dbReference>
<dbReference type="FunFam" id="3.30.70.1050:FF:000002">
    <property type="entry name" value="Trigger factor"/>
    <property type="match status" value="1"/>
</dbReference>
<dbReference type="Gene3D" id="3.10.50.40">
    <property type="match status" value="1"/>
</dbReference>
<dbReference type="Gene3D" id="3.30.70.1050">
    <property type="entry name" value="Trigger factor ribosome-binding domain"/>
    <property type="match status" value="1"/>
</dbReference>
<dbReference type="Gene3D" id="1.10.3120.10">
    <property type="entry name" value="Trigger factor, C-terminal domain"/>
    <property type="match status" value="1"/>
</dbReference>
<dbReference type="HAMAP" id="MF_00303">
    <property type="entry name" value="Trigger_factor_Tig"/>
    <property type="match status" value="1"/>
</dbReference>
<dbReference type="InterPro" id="IPR046357">
    <property type="entry name" value="PPIase_dom_sf"/>
</dbReference>
<dbReference type="InterPro" id="IPR001179">
    <property type="entry name" value="PPIase_FKBP_dom"/>
</dbReference>
<dbReference type="InterPro" id="IPR005215">
    <property type="entry name" value="Trig_fac"/>
</dbReference>
<dbReference type="InterPro" id="IPR008880">
    <property type="entry name" value="Trigger_fac_C"/>
</dbReference>
<dbReference type="InterPro" id="IPR037041">
    <property type="entry name" value="Trigger_fac_C_sf"/>
</dbReference>
<dbReference type="InterPro" id="IPR008881">
    <property type="entry name" value="Trigger_fac_ribosome-bd_bac"/>
</dbReference>
<dbReference type="InterPro" id="IPR036611">
    <property type="entry name" value="Trigger_fac_ribosome-bd_sf"/>
</dbReference>
<dbReference type="InterPro" id="IPR027304">
    <property type="entry name" value="Trigger_fact/SurA_dom_sf"/>
</dbReference>
<dbReference type="NCBIfam" id="TIGR00115">
    <property type="entry name" value="tig"/>
    <property type="match status" value="1"/>
</dbReference>
<dbReference type="PANTHER" id="PTHR30560">
    <property type="entry name" value="TRIGGER FACTOR CHAPERONE AND PEPTIDYL-PROLYL CIS/TRANS ISOMERASE"/>
    <property type="match status" value="1"/>
</dbReference>
<dbReference type="PANTHER" id="PTHR30560:SF3">
    <property type="entry name" value="TRIGGER FACTOR-LIKE PROTEIN TIG, CHLOROPLASTIC"/>
    <property type="match status" value="1"/>
</dbReference>
<dbReference type="Pfam" id="PF00254">
    <property type="entry name" value="FKBP_C"/>
    <property type="match status" value="1"/>
</dbReference>
<dbReference type="Pfam" id="PF05698">
    <property type="entry name" value="Trigger_C"/>
    <property type="match status" value="1"/>
</dbReference>
<dbReference type="Pfam" id="PF05697">
    <property type="entry name" value="Trigger_N"/>
    <property type="match status" value="1"/>
</dbReference>
<dbReference type="PIRSF" id="PIRSF003095">
    <property type="entry name" value="Trigger_factor"/>
    <property type="match status" value="1"/>
</dbReference>
<dbReference type="SUPFAM" id="SSF54534">
    <property type="entry name" value="FKBP-like"/>
    <property type="match status" value="1"/>
</dbReference>
<dbReference type="SUPFAM" id="SSF109998">
    <property type="entry name" value="Triger factor/SurA peptide-binding domain-like"/>
    <property type="match status" value="1"/>
</dbReference>
<dbReference type="SUPFAM" id="SSF102735">
    <property type="entry name" value="Trigger factor ribosome-binding domain"/>
    <property type="match status" value="1"/>
</dbReference>
<dbReference type="PROSITE" id="PS50059">
    <property type="entry name" value="FKBP_PPIASE"/>
    <property type="match status" value="1"/>
</dbReference>
<evidence type="ECO:0000255" key="1">
    <source>
        <dbReference type="HAMAP-Rule" id="MF_00303"/>
    </source>
</evidence>
<gene>
    <name evidence="1" type="primary">tig</name>
    <name type="ordered locus">lwe1284</name>
</gene>